<name>DER_MYCTO</name>
<protein>
    <recommendedName>
        <fullName evidence="1">GTPase Der</fullName>
    </recommendedName>
    <alternativeName>
        <fullName evidence="1">GTP-binding protein EngA</fullName>
    </alternativeName>
</protein>
<proteinExistence type="inferred from homology"/>
<keyword id="KW-0342">GTP-binding</keyword>
<keyword id="KW-0547">Nucleotide-binding</keyword>
<keyword id="KW-1185">Reference proteome</keyword>
<keyword id="KW-0677">Repeat</keyword>
<keyword id="KW-0690">Ribosome biogenesis</keyword>
<dbReference type="EMBL" id="AE000516">
    <property type="protein sequence ID" value="AAK46024.1"/>
    <property type="molecule type" value="Genomic_DNA"/>
</dbReference>
<dbReference type="PIR" id="H70504">
    <property type="entry name" value="H70504"/>
</dbReference>
<dbReference type="RefSeq" id="WP_003898984.1">
    <property type="nucleotide sequence ID" value="NZ_KK341227.1"/>
</dbReference>
<dbReference type="SMR" id="P9WNL2"/>
<dbReference type="GeneID" id="45425684"/>
<dbReference type="KEGG" id="mtc:MT1753"/>
<dbReference type="PATRIC" id="fig|83331.31.peg.1882"/>
<dbReference type="HOGENOM" id="CLU_016077_6_2_11"/>
<dbReference type="Proteomes" id="UP000001020">
    <property type="component" value="Chromosome"/>
</dbReference>
<dbReference type="GO" id="GO:0016887">
    <property type="term" value="F:ATP hydrolysis activity"/>
    <property type="evidence" value="ECO:0007669"/>
    <property type="project" value="InterPro"/>
</dbReference>
<dbReference type="GO" id="GO:0005525">
    <property type="term" value="F:GTP binding"/>
    <property type="evidence" value="ECO:0007669"/>
    <property type="project" value="UniProtKB-UniRule"/>
</dbReference>
<dbReference type="GO" id="GO:0043022">
    <property type="term" value="F:ribosome binding"/>
    <property type="evidence" value="ECO:0007669"/>
    <property type="project" value="TreeGrafter"/>
</dbReference>
<dbReference type="GO" id="GO:0042254">
    <property type="term" value="P:ribosome biogenesis"/>
    <property type="evidence" value="ECO:0007669"/>
    <property type="project" value="UniProtKB-KW"/>
</dbReference>
<dbReference type="CDD" id="cd01894">
    <property type="entry name" value="EngA1"/>
    <property type="match status" value="1"/>
</dbReference>
<dbReference type="CDD" id="cd01895">
    <property type="entry name" value="EngA2"/>
    <property type="match status" value="1"/>
</dbReference>
<dbReference type="FunFam" id="3.30.300.20:FF:000004">
    <property type="entry name" value="GTPase Der"/>
    <property type="match status" value="1"/>
</dbReference>
<dbReference type="FunFam" id="3.40.50.300:FF:000040">
    <property type="entry name" value="GTPase Der"/>
    <property type="match status" value="1"/>
</dbReference>
<dbReference type="FunFam" id="3.40.50.300:FF:000057">
    <property type="entry name" value="GTPase Der"/>
    <property type="match status" value="1"/>
</dbReference>
<dbReference type="Gene3D" id="3.30.300.20">
    <property type="match status" value="1"/>
</dbReference>
<dbReference type="Gene3D" id="3.40.50.300">
    <property type="entry name" value="P-loop containing nucleotide triphosphate hydrolases"/>
    <property type="match status" value="2"/>
</dbReference>
<dbReference type="HAMAP" id="MF_00195">
    <property type="entry name" value="GTPase_Der"/>
    <property type="match status" value="1"/>
</dbReference>
<dbReference type="InterPro" id="IPR003593">
    <property type="entry name" value="AAA+_ATPase"/>
</dbReference>
<dbReference type="InterPro" id="IPR031166">
    <property type="entry name" value="G_ENGA"/>
</dbReference>
<dbReference type="InterPro" id="IPR006073">
    <property type="entry name" value="GTP-bd"/>
</dbReference>
<dbReference type="InterPro" id="IPR016484">
    <property type="entry name" value="GTPase_Der"/>
</dbReference>
<dbReference type="InterPro" id="IPR032859">
    <property type="entry name" value="KH_dom-like"/>
</dbReference>
<dbReference type="InterPro" id="IPR015946">
    <property type="entry name" value="KH_dom-like_a/b"/>
</dbReference>
<dbReference type="InterPro" id="IPR027417">
    <property type="entry name" value="P-loop_NTPase"/>
</dbReference>
<dbReference type="InterPro" id="IPR005225">
    <property type="entry name" value="Small_GTP-bd"/>
</dbReference>
<dbReference type="NCBIfam" id="TIGR03594">
    <property type="entry name" value="GTPase_EngA"/>
    <property type="match status" value="1"/>
</dbReference>
<dbReference type="NCBIfam" id="NF002828">
    <property type="entry name" value="PRK03003.1"/>
    <property type="match status" value="1"/>
</dbReference>
<dbReference type="NCBIfam" id="TIGR00231">
    <property type="entry name" value="small_GTP"/>
    <property type="match status" value="2"/>
</dbReference>
<dbReference type="PANTHER" id="PTHR43834">
    <property type="entry name" value="GTPASE DER"/>
    <property type="match status" value="1"/>
</dbReference>
<dbReference type="PANTHER" id="PTHR43834:SF6">
    <property type="entry name" value="GTPASE DER"/>
    <property type="match status" value="1"/>
</dbReference>
<dbReference type="Pfam" id="PF14714">
    <property type="entry name" value="KH_dom-like"/>
    <property type="match status" value="1"/>
</dbReference>
<dbReference type="Pfam" id="PF01926">
    <property type="entry name" value="MMR_HSR1"/>
    <property type="match status" value="2"/>
</dbReference>
<dbReference type="PIRSF" id="PIRSF006485">
    <property type="entry name" value="GTP-binding_EngA"/>
    <property type="match status" value="1"/>
</dbReference>
<dbReference type="PRINTS" id="PR00326">
    <property type="entry name" value="GTP1OBG"/>
</dbReference>
<dbReference type="SMART" id="SM00382">
    <property type="entry name" value="AAA"/>
    <property type="match status" value="2"/>
</dbReference>
<dbReference type="SUPFAM" id="SSF52540">
    <property type="entry name" value="P-loop containing nucleoside triphosphate hydrolases"/>
    <property type="match status" value="2"/>
</dbReference>
<dbReference type="PROSITE" id="PS51712">
    <property type="entry name" value="G_ENGA"/>
    <property type="match status" value="2"/>
</dbReference>
<sequence length="463" mass="49958">MTQDGTWVDESDWQLDDSEIAESGAAPVVAVVGRPNVGKSTLVNRILGRREAVVQDIPGVTRDRVCYDALWTGRRFVVQDTGGWEPNAKGLQRLVAEQASVAMRTADAVILVVDAGVGATAADEAAARILLRSGKPVFLAANKVDSEKGESDAAALWSLGLGEPHAISAMHGRGVADLLDGVLAALPEVGESASASGGPRRVALVGKPNVGKSSLLNKLAGDQRSVVHEAAGTTVDPVDSLIELGGDVWRFVDTAGLRRKVGQASGHEFYASVRTHAAIDSAEVAIVLIDASQPLTEQDLRVISMVIEAGRALVLAYNKWDLVDEDRRELLQREIDRELVQVRWAQRVNISAKTGRAVHKLVPAMEDALASWDTRIATGPLNTWLTEVTAATPPPVRGGKQPRILFATQATARPPTFVLFTTGFLEAGYRRFLERRLRETFGFDGSPIRVNVRVREKRAGKRR</sequence>
<accession>P9WNL2</accession>
<accession>L0TA66</accession>
<accession>O33212</accession>
<accession>P64057</accession>
<gene>
    <name evidence="1" type="primary">der</name>
    <name type="synonym">engA</name>
    <name type="ordered locus">MT1753</name>
</gene>
<evidence type="ECO:0000255" key="1">
    <source>
        <dbReference type="HAMAP-Rule" id="MF_00195"/>
    </source>
</evidence>
<organism>
    <name type="scientific">Mycobacterium tuberculosis (strain CDC 1551 / Oshkosh)</name>
    <dbReference type="NCBI Taxonomy" id="83331"/>
    <lineage>
        <taxon>Bacteria</taxon>
        <taxon>Bacillati</taxon>
        <taxon>Actinomycetota</taxon>
        <taxon>Actinomycetes</taxon>
        <taxon>Mycobacteriales</taxon>
        <taxon>Mycobacteriaceae</taxon>
        <taxon>Mycobacterium</taxon>
        <taxon>Mycobacterium tuberculosis complex</taxon>
    </lineage>
</organism>
<feature type="chain" id="PRO_0000427107" description="GTPase Der">
    <location>
        <begin position="1"/>
        <end position="463"/>
    </location>
</feature>
<feature type="domain" description="EngA-type G 1">
    <location>
        <begin position="27"/>
        <end position="190"/>
    </location>
</feature>
<feature type="domain" description="EngA-type G 2">
    <location>
        <begin position="200"/>
        <end position="373"/>
    </location>
</feature>
<feature type="domain" description="KH-like" evidence="1">
    <location>
        <begin position="374"/>
        <end position="456"/>
    </location>
</feature>
<feature type="binding site" evidence="1">
    <location>
        <begin position="33"/>
        <end position="40"/>
    </location>
    <ligand>
        <name>GTP</name>
        <dbReference type="ChEBI" id="CHEBI:37565"/>
        <label>1</label>
    </ligand>
</feature>
<feature type="binding site" evidence="1">
    <location>
        <begin position="80"/>
        <end position="84"/>
    </location>
    <ligand>
        <name>GTP</name>
        <dbReference type="ChEBI" id="CHEBI:37565"/>
        <label>1</label>
    </ligand>
</feature>
<feature type="binding site" evidence="1">
    <location>
        <begin position="142"/>
        <end position="145"/>
    </location>
    <ligand>
        <name>GTP</name>
        <dbReference type="ChEBI" id="CHEBI:37565"/>
        <label>1</label>
    </ligand>
</feature>
<feature type="binding site" evidence="1">
    <location>
        <begin position="206"/>
        <end position="213"/>
    </location>
    <ligand>
        <name>GTP</name>
        <dbReference type="ChEBI" id="CHEBI:37565"/>
        <label>2</label>
    </ligand>
</feature>
<feature type="binding site" evidence="1">
    <location>
        <begin position="253"/>
        <end position="257"/>
    </location>
    <ligand>
        <name>GTP</name>
        <dbReference type="ChEBI" id="CHEBI:37565"/>
        <label>2</label>
    </ligand>
</feature>
<feature type="binding site" evidence="1">
    <location>
        <begin position="318"/>
        <end position="321"/>
    </location>
    <ligand>
        <name>GTP</name>
        <dbReference type="ChEBI" id="CHEBI:37565"/>
        <label>2</label>
    </ligand>
</feature>
<reference key="1">
    <citation type="journal article" date="2002" name="J. Bacteriol.">
        <title>Whole-genome comparison of Mycobacterium tuberculosis clinical and laboratory strains.</title>
        <authorList>
            <person name="Fleischmann R.D."/>
            <person name="Alland D."/>
            <person name="Eisen J.A."/>
            <person name="Carpenter L."/>
            <person name="White O."/>
            <person name="Peterson J.D."/>
            <person name="DeBoy R.T."/>
            <person name="Dodson R.J."/>
            <person name="Gwinn M.L."/>
            <person name="Haft D.H."/>
            <person name="Hickey E.K."/>
            <person name="Kolonay J.F."/>
            <person name="Nelson W.C."/>
            <person name="Umayam L.A."/>
            <person name="Ermolaeva M.D."/>
            <person name="Salzberg S.L."/>
            <person name="Delcher A."/>
            <person name="Utterback T.R."/>
            <person name="Weidman J.F."/>
            <person name="Khouri H.M."/>
            <person name="Gill J."/>
            <person name="Mikula A."/>
            <person name="Bishai W."/>
            <person name="Jacobs W.R. Jr."/>
            <person name="Venter J.C."/>
            <person name="Fraser C.M."/>
        </authorList>
    </citation>
    <scope>NUCLEOTIDE SEQUENCE [LARGE SCALE GENOMIC DNA]</scope>
    <source>
        <strain>CDC 1551 / Oshkosh</strain>
    </source>
</reference>
<comment type="function">
    <text evidence="1">GTPase that plays an essential role in the late steps of ribosome biogenesis.</text>
</comment>
<comment type="subunit">
    <text evidence="1">Associates with the 50S ribosomal subunit.</text>
</comment>
<comment type="similarity">
    <text evidence="1">Belongs to the TRAFAC class TrmE-Era-EngA-EngB-Septin-like GTPase superfamily. EngA (Der) GTPase family.</text>
</comment>